<name>D106A_HUMAN</name>
<sequence length="65" mass="7369">MRTFLFLFAVLFFLTPAKNAFFDEKCNKLKGTCKNNCGKNEELIALCQKSLKCCRTIQPCGSIID</sequence>
<feature type="signal peptide" evidence="5">
    <location>
        <begin position="1"/>
        <end position="20"/>
    </location>
</feature>
<feature type="peptide" id="PRO_0000006977" description="Beta-defensin 106">
    <location>
        <begin position="21"/>
        <end position="65"/>
    </location>
</feature>
<feature type="disulfide bond" evidence="3 6">
    <location>
        <begin position="26"/>
        <end position="53"/>
    </location>
</feature>
<feature type="disulfide bond" evidence="1">
    <location>
        <begin position="33"/>
        <end position="47"/>
    </location>
</feature>
<feature type="disulfide bond" evidence="1">
    <location>
        <begin position="37"/>
        <end position="54"/>
    </location>
</feature>
<feature type="sequence conflict" description="In Ref. 3; AAQ09526." evidence="4" ref="3">
    <original>S</original>
    <variation>F</variation>
    <location>
        <position position="50"/>
    </location>
</feature>
<feature type="helix" evidence="7">
    <location>
        <begin position="22"/>
        <end position="28"/>
    </location>
</feature>
<feature type="strand" evidence="7">
    <location>
        <begin position="32"/>
        <end position="36"/>
    </location>
</feature>
<feature type="strand" evidence="7">
    <location>
        <begin position="41"/>
        <end position="46"/>
    </location>
</feature>
<feature type="strand" evidence="7">
    <location>
        <begin position="52"/>
        <end position="56"/>
    </location>
</feature>
<feature type="strand" evidence="7">
    <location>
        <begin position="59"/>
        <end position="61"/>
    </location>
</feature>
<protein>
    <recommendedName>
        <fullName>Beta-defensin 106</fullName>
    </recommendedName>
    <alternativeName>
        <fullName>Beta-defensin 6</fullName>
        <shortName>BD-6</shortName>
        <shortName>DEFB-6</shortName>
    </alternativeName>
    <alternativeName>
        <fullName>Defensin, beta 106</fullName>
    </alternativeName>
</protein>
<reference key="1">
    <citation type="journal article" date="2002" name="Proc. Natl. Acad. Sci. U.S.A.">
        <title>Discovery of five conserved beta-defensin gene clusters using a computational search strategy.</title>
        <authorList>
            <person name="Schutte B.C."/>
            <person name="Mitros J.P."/>
            <person name="Bartlett J.A."/>
            <person name="Walters J.D."/>
            <person name="Jia H.P."/>
            <person name="Welsh M.J."/>
            <person name="Casavant T.L."/>
            <person name="McCray P.B. Jr."/>
        </authorList>
    </citation>
    <scope>NUCLEOTIDE SEQUENCE [MRNA]</scope>
    <source>
        <tissue>B-cell</tissue>
        <tissue>Fetal lung</tissue>
        <tissue>Testis</tissue>
    </source>
</reference>
<reference key="2">
    <citation type="journal article" date="2002" name="J. Immunol.">
        <title>Identification of multiple novel epididymis-specific beta-defensin isoforms in humans and mice.</title>
        <authorList>
            <person name="Yamaguchi Y."/>
            <person name="Nagase T."/>
            <person name="Makita R."/>
            <person name="Fukuhara S."/>
            <person name="Tomita T."/>
            <person name="Tominaga T."/>
            <person name="Kurihara H."/>
            <person name="Ouchi Y."/>
        </authorList>
    </citation>
    <scope>NUCLEOTIDE SEQUENCE [MRNA]</scope>
    <source>
        <tissue>Epididymis</tissue>
    </source>
</reference>
<reference key="3">
    <citation type="journal article" date="2003" name="Am. J. Respir. Cell Mol. Biol.">
        <title>ORFeome-based search of airway epithelial cell-specific novel human beta-defensin genes.</title>
        <authorList>
            <person name="Kao C.Y."/>
            <person name="Chen Y."/>
            <person name="Zhao Y.H."/>
            <person name="Wu R."/>
        </authorList>
    </citation>
    <scope>NUCLEOTIDE SEQUENCE [MRNA]</scope>
    <scope>FUNCTION</scope>
    <scope>TISSUE SPECIFICITY</scope>
</reference>
<reference key="4">
    <citation type="journal article" date="2004" name="Genome Res.">
        <title>The status, quality, and expansion of the NIH full-length cDNA project: the Mammalian Gene Collection (MGC).</title>
        <authorList>
            <consortium name="The MGC Project Team"/>
        </authorList>
    </citation>
    <scope>NUCLEOTIDE SEQUENCE [LARGE SCALE MRNA]</scope>
</reference>
<reference key="5">
    <citation type="journal article" date="2003" name="Genome Biol.">
        <title>Duplication and selection in the evolution of primate beta-defensin genes.</title>
        <authorList>
            <person name="Semple C.A.M."/>
            <person name="Rolfe M."/>
            <person name="Dorin J.R."/>
        </authorList>
    </citation>
    <scope>NUCLEOTIDE SEQUENCE [MRNA] OF 1-57</scope>
</reference>
<reference key="6">
    <citation type="journal article" date="2013" name="J. Mol. Biol.">
        <title>Structural basis for the interaction of human beta-defensin 6 and its putative chemokine receptor CCR2 and breast cancer microvesicles.</title>
        <authorList>
            <person name="De Paula V.S."/>
            <person name="Gomes N.S."/>
            <person name="Lima L.G."/>
            <person name="Miyamoto C.A."/>
            <person name="Monteiro R.Q."/>
            <person name="Almeida F.C."/>
            <person name="Valente A.P."/>
        </authorList>
    </citation>
    <scope>STRUCTURE BY NMR OF 21-65</scope>
    <scope>DISULFIDE BONDS</scope>
    <scope>FUNCTION</scope>
    <scope>SUBUNIT</scope>
    <scope>INTERACTION WITH CCR2</scope>
    <scope>SUBCELLULAR LOCATION</scope>
</reference>
<accession>Q8N104</accession>
<accession>Q2NKR0</accession>
<accession>Q496I8</accession>
<evidence type="ECO:0000250" key="1"/>
<evidence type="ECO:0000269" key="2">
    <source>
    </source>
</evidence>
<evidence type="ECO:0000269" key="3">
    <source>
    </source>
</evidence>
<evidence type="ECO:0000305" key="4"/>
<evidence type="ECO:0000305" key="5">
    <source>
    </source>
</evidence>
<evidence type="ECO:0007744" key="6">
    <source>
        <dbReference type="PDB" id="2LWL"/>
    </source>
</evidence>
<evidence type="ECO:0007829" key="7">
    <source>
        <dbReference type="PDB" id="2LWL"/>
    </source>
</evidence>
<keyword id="KW-0002">3D-structure</keyword>
<keyword id="KW-0044">Antibiotic</keyword>
<keyword id="KW-0929">Antimicrobial</keyword>
<keyword id="KW-0211">Defensin</keyword>
<keyword id="KW-1015">Disulfide bond</keyword>
<keyword id="KW-0472">Membrane</keyword>
<keyword id="KW-1185">Reference proteome</keyword>
<keyword id="KW-0964">Secreted</keyword>
<keyword id="KW-0732">Signal</keyword>
<proteinExistence type="evidence at protein level"/>
<gene>
    <name type="primary">DEFB106A</name>
    <name type="synonym">BD6</name>
    <name type="synonym">DEFB106</name>
    <name type="synonym">DEFB6</name>
</gene>
<gene>
    <name type="primary">DEFB106B</name>
</gene>
<organism>
    <name type="scientific">Homo sapiens</name>
    <name type="common">Human</name>
    <dbReference type="NCBI Taxonomy" id="9606"/>
    <lineage>
        <taxon>Eukaryota</taxon>
        <taxon>Metazoa</taxon>
        <taxon>Chordata</taxon>
        <taxon>Craniata</taxon>
        <taxon>Vertebrata</taxon>
        <taxon>Euteleostomi</taxon>
        <taxon>Mammalia</taxon>
        <taxon>Eutheria</taxon>
        <taxon>Euarchontoglires</taxon>
        <taxon>Primates</taxon>
        <taxon>Haplorrhini</taxon>
        <taxon>Catarrhini</taxon>
        <taxon>Hominidae</taxon>
        <taxon>Homo</taxon>
    </lineage>
</organism>
<dbReference type="EMBL" id="AY122466">
    <property type="protein sequence ID" value="AAM93908.1"/>
    <property type="molecule type" value="mRNA"/>
</dbReference>
<dbReference type="EMBL" id="AB089181">
    <property type="protein sequence ID" value="BAC10631.1"/>
    <property type="molecule type" value="mRNA"/>
</dbReference>
<dbReference type="EMBL" id="AF529417">
    <property type="protein sequence ID" value="AAQ09526.1"/>
    <property type="molecule type" value="mRNA"/>
</dbReference>
<dbReference type="EMBL" id="BC100844">
    <property type="protein sequence ID" value="AAI00845.1"/>
    <property type="molecule type" value="mRNA"/>
</dbReference>
<dbReference type="EMBL" id="BC100845">
    <property type="protein sequence ID" value="AAI00846.1"/>
    <property type="molecule type" value="mRNA"/>
</dbReference>
<dbReference type="EMBL" id="BC100846">
    <property type="protein sequence ID" value="AAI00847.1"/>
    <property type="molecule type" value="mRNA"/>
</dbReference>
<dbReference type="EMBL" id="BC100847">
    <property type="protein sequence ID" value="AAI00848.1"/>
    <property type="molecule type" value="mRNA"/>
</dbReference>
<dbReference type="EMBL" id="BC110062">
    <property type="protein sequence ID" value="AAI10063.1"/>
    <property type="molecule type" value="mRNA"/>
</dbReference>
<dbReference type="EMBL" id="BC111688">
    <property type="protein sequence ID" value="AAI11689.1"/>
    <property type="molecule type" value="mRNA"/>
</dbReference>
<dbReference type="EMBL" id="AF540978">
    <property type="protein sequence ID" value="AAN33114.1"/>
    <property type="molecule type" value="mRNA"/>
</dbReference>
<dbReference type="CCDS" id="CCDS34813.1"/>
<dbReference type="CCDS" id="CCDS34833.1"/>
<dbReference type="RefSeq" id="NP_001035794.1">
    <property type="nucleotide sequence ID" value="NM_001040704.1"/>
</dbReference>
<dbReference type="RefSeq" id="NP_689464.1">
    <property type="nucleotide sequence ID" value="NM_152251.4"/>
</dbReference>
<dbReference type="PDB" id="2LWL">
    <property type="method" value="NMR"/>
    <property type="chains" value="A=21-65"/>
</dbReference>
<dbReference type="PDBsum" id="2LWL"/>
<dbReference type="SMR" id="Q8N104"/>
<dbReference type="BioGRID" id="128834">
    <property type="interactions" value="18"/>
</dbReference>
<dbReference type="FunCoup" id="Q8N104">
    <property type="interactions" value="3"/>
</dbReference>
<dbReference type="IntAct" id="Q8N104">
    <property type="interactions" value="16"/>
</dbReference>
<dbReference type="STRING" id="9606.ENSP00000334364"/>
<dbReference type="BioMuta" id="DEFB106A"/>
<dbReference type="DMDM" id="26392715"/>
<dbReference type="PaxDb" id="9606-ENSP00000334364"/>
<dbReference type="PeptideAtlas" id="Q8N104"/>
<dbReference type="ProteomicsDB" id="71503"/>
<dbReference type="Antibodypedia" id="56702">
    <property type="antibodies" value="8 antibodies from 7 providers"/>
</dbReference>
<dbReference type="Antibodypedia" id="69006">
    <property type="antibodies" value="26 antibodies from 6 providers"/>
</dbReference>
<dbReference type="DNASU" id="245909"/>
<dbReference type="Ensembl" id="ENST00000335186.3">
    <property type="protein sequence ID" value="ENSP00000335307.2"/>
    <property type="gene ID" value="ENSG00000186579.3"/>
</dbReference>
<dbReference type="Ensembl" id="ENST00000335479.2">
    <property type="protein sequence ID" value="ENSP00000334364.2"/>
    <property type="gene ID" value="ENSG00000187082.2"/>
</dbReference>
<dbReference type="Ensembl" id="ENST00000621252.2">
    <property type="protein sequence ID" value="ENSP00000477883.1"/>
    <property type="gene ID" value="ENSG00000275794.2"/>
</dbReference>
<dbReference type="Ensembl" id="ENST00000645601.3">
    <property type="protein sequence ID" value="ENSP00000496662.1"/>
    <property type="gene ID" value="ENSG00000284937.3"/>
</dbReference>
<dbReference type="Ensembl" id="ENST00000650001.2">
    <property type="protein sequence ID" value="ENSP00000497538.1"/>
    <property type="gene ID" value="ENSG00000285617.2"/>
</dbReference>
<dbReference type="GeneID" id="245909"/>
<dbReference type="GeneID" id="503841"/>
<dbReference type="KEGG" id="hsa:245909"/>
<dbReference type="KEGG" id="hsa:503841"/>
<dbReference type="MANE-Select" id="ENST00000335186.3">
    <property type="protein sequence ID" value="ENSP00000335307.2"/>
    <property type="RefSeq nucleotide sequence ID" value="NM_152251.4"/>
    <property type="RefSeq protein sequence ID" value="NP_689464.1"/>
</dbReference>
<dbReference type="MANE-Select" id="ENST00000335479.2">
    <property type="protein sequence ID" value="ENSP00000334364.2"/>
    <property type="RefSeq nucleotide sequence ID" value="NM_001040704.2"/>
    <property type="RefSeq protein sequence ID" value="NP_001035794.1"/>
</dbReference>
<dbReference type="UCSC" id="uc003wro.2">
    <property type="organism name" value="human"/>
</dbReference>
<dbReference type="AGR" id="HGNC:18088"/>
<dbReference type="AGR" id="HGNC:28879"/>
<dbReference type="CTD" id="245909"/>
<dbReference type="CTD" id="503841"/>
<dbReference type="GeneCards" id="DEFB106A"/>
<dbReference type="GeneCards" id="DEFB106B"/>
<dbReference type="HGNC" id="HGNC:18088">
    <property type="gene designation" value="DEFB106A"/>
</dbReference>
<dbReference type="HGNC" id="HGNC:28879">
    <property type="gene designation" value="DEFB106B"/>
</dbReference>
<dbReference type="HPA" id="ENSG00000186579">
    <property type="expression patterns" value="Tissue enriched (epididymis)"/>
</dbReference>
<dbReference type="HPA" id="ENSG00000187082">
    <property type="expression patterns" value="Tissue enriched (epididymis)"/>
</dbReference>
<dbReference type="neXtProt" id="NX_Q8N104"/>
<dbReference type="OpenTargets" id="ENSG00000187082"/>
<dbReference type="PharmGKB" id="PA142671992"/>
<dbReference type="VEuPathDB" id="HostDB:ENSG00000186579"/>
<dbReference type="VEuPathDB" id="HostDB:ENSG00000187082"/>
<dbReference type="eggNOG" id="ENOG502TF62">
    <property type="taxonomic scope" value="Eukaryota"/>
</dbReference>
<dbReference type="GeneTree" id="ENSGT00390000005938"/>
<dbReference type="HOGENOM" id="CLU_187814_0_0_1"/>
<dbReference type="InParanoid" id="Q8N104"/>
<dbReference type="OMA" id="RGTCKNN"/>
<dbReference type="OrthoDB" id="9534863at2759"/>
<dbReference type="PAN-GO" id="Q8N104">
    <property type="GO annotations" value="2 GO annotations based on evolutionary models"/>
</dbReference>
<dbReference type="PhylomeDB" id="Q8N104"/>
<dbReference type="PathwayCommons" id="Q8N104"/>
<dbReference type="Reactome" id="R-HSA-1461957">
    <property type="pathway name" value="Beta defensins"/>
</dbReference>
<dbReference type="Reactome" id="R-HSA-1461973">
    <property type="pathway name" value="Defensins"/>
</dbReference>
<dbReference type="SignaLink" id="Q8N104"/>
<dbReference type="BioGRID-ORCS" id="245909">
    <property type="hits" value="8 hits in 591 CRISPR screens"/>
</dbReference>
<dbReference type="BioGRID-ORCS" id="503841">
    <property type="hits" value="27 hits in 645 CRISPR screens"/>
</dbReference>
<dbReference type="EvolutionaryTrace" id="Q8N104"/>
<dbReference type="GeneWiki" id="DEFB106A"/>
<dbReference type="Pharos" id="Q8N104">
    <property type="development level" value="Tbio"/>
</dbReference>
<dbReference type="PRO" id="PR:Q8N104"/>
<dbReference type="Proteomes" id="UP000005640">
    <property type="component" value="Chromosome 8"/>
</dbReference>
<dbReference type="RNAct" id="Q8N104">
    <property type="molecule type" value="protein"/>
</dbReference>
<dbReference type="Bgee" id="ENSG00000186579">
    <property type="expression patterns" value="Expressed in liver and 31 other cell types or tissues"/>
</dbReference>
<dbReference type="GO" id="GO:0016020">
    <property type="term" value="C:membrane"/>
    <property type="evidence" value="ECO:0000314"/>
    <property type="project" value="UniProtKB"/>
</dbReference>
<dbReference type="GO" id="GO:1990742">
    <property type="term" value="C:microvesicle"/>
    <property type="evidence" value="ECO:0000314"/>
    <property type="project" value="UniProtKB"/>
</dbReference>
<dbReference type="GO" id="GO:0005634">
    <property type="term" value="C:nucleus"/>
    <property type="evidence" value="ECO:0000314"/>
    <property type="project" value="UniProtKB"/>
</dbReference>
<dbReference type="GO" id="GO:0031727">
    <property type="term" value="F:CCR2 chemokine receptor binding"/>
    <property type="evidence" value="ECO:0000314"/>
    <property type="project" value="UniProtKB"/>
</dbReference>
<dbReference type="GO" id="GO:0008201">
    <property type="term" value="F:heparin binding"/>
    <property type="evidence" value="ECO:0000314"/>
    <property type="project" value="UniProtKB"/>
</dbReference>
<dbReference type="GO" id="GO:0001530">
    <property type="term" value="F:lipopolysaccharide binding"/>
    <property type="evidence" value="ECO:0000314"/>
    <property type="project" value="UniProtKB"/>
</dbReference>
<dbReference type="GO" id="GO:0061760">
    <property type="term" value="P:antifungal innate immune response"/>
    <property type="evidence" value="ECO:0000314"/>
    <property type="project" value="UniProtKB"/>
</dbReference>
<dbReference type="GO" id="GO:0050829">
    <property type="term" value="P:defense response to Gram-negative bacterium"/>
    <property type="evidence" value="ECO:0000314"/>
    <property type="project" value="UniProtKB"/>
</dbReference>
<dbReference type="GO" id="GO:0050830">
    <property type="term" value="P:defense response to Gram-positive bacterium"/>
    <property type="evidence" value="ECO:0000314"/>
    <property type="project" value="UniProtKB"/>
</dbReference>
<dbReference type="GO" id="GO:0045087">
    <property type="term" value="P:innate immune response"/>
    <property type="evidence" value="ECO:0000314"/>
    <property type="project" value="UniProtKB"/>
</dbReference>
<dbReference type="FunFam" id="3.10.360.10:FF:000002">
    <property type="entry name" value="Beta-defensin 106A"/>
    <property type="match status" value="1"/>
</dbReference>
<dbReference type="Gene3D" id="3.10.360.10">
    <property type="entry name" value="Antimicrobial Peptide, Beta-defensin 2, Chain A"/>
    <property type="match status" value="1"/>
</dbReference>
<dbReference type="InterPro" id="IPR025933">
    <property type="entry name" value="Beta_defensin_dom"/>
</dbReference>
<dbReference type="Pfam" id="PF13841">
    <property type="entry name" value="Defensin_beta_2"/>
    <property type="match status" value="1"/>
</dbReference>
<comment type="function">
    <text evidence="2 3">Has antibacterial activity (PubMed:12600824). Acts as a ligand for C-C chemokine receptor CCR2 (PubMed:23938203).</text>
</comment>
<comment type="subunit">
    <text evidence="3">Monomer (PubMed:23938203). Interacts with CCR2 (via extracellular N-terminal region); this interaction may preferentially require specific tyrosine sulfation on CCR2 (PubMed:23938203).</text>
</comment>
<comment type="subcellular location">
    <subcellularLocation>
        <location evidence="4">Secreted</location>
    </subcellularLocation>
    <subcellularLocation>
        <location evidence="3">Membrane</location>
    </subcellularLocation>
    <text evidence="3">Associates with tumor cell membrane-derived microvesicles (PubMed:23938203).</text>
</comment>
<comment type="tissue specificity">
    <text evidence="2">Expressed specifically in epididymis and lung.</text>
</comment>
<comment type="similarity">
    <text evidence="4">Belongs to the beta-defensin family.</text>
</comment>